<feature type="chain" id="PRO_0000430493" description="Protein TMEPAI">
    <location>
        <begin position="1"/>
        <end position="285"/>
    </location>
</feature>
<feature type="topological domain" description="Lumenal" evidence="2">
    <location>
        <begin position="1"/>
        <end position="38"/>
    </location>
</feature>
<feature type="transmembrane region" description="Helical" evidence="2">
    <location>
        <begin position="39"/>
        <end position="59"/>
    </location>
</feature>
<feature type="topological domain" description="Cytoplasmic" evidence="2">
    <location>
        <begin position="60"/>
        <end position="285"/>
    </location>
</feature>
<feature type="region of interest" description="Disordered" evidence="3">
    <location>
        <begin position="76"/>
        <end position="97"/>
    </location>
</feature>
<feature type="region of interest" description="Disordered" evidence="3">
    <location>
        <begin position="201"/>
        <end position="222"/>
    </location>
</feature>
<feature type="region of interest" description="Disordered" evidence="3">
    <location>
        <begin position="256"/>
        <end position="285"/>
    </location>
</feature>
<feature type="short sequence motif" description="PPxY motif 1">
    <location>
        <begin position="155"/>
        <end position="158"/>
    </location>
</feature>
<feature type="short sequence motif" description="SMAD interaction motif (SIM)">
    <location>
        <begin position="183"/>
        <end position="186"/>
    </location>
</feature>
<feature type="short sequence motif" description="PPxY motif 2">
    <location>
        <begin position="226"/>
        <end position="229"/>
    </location>
</feature>
<feature type="compositionally biased region" description="Polar residues" evidence="3">
    <location>
        <begin position="85"/>
        <end position="97"/>
    </location>
</feature>
<feature type="compositionally biased region" description="Polar residues" evidence="3">
    <location>
        <begin position="206"/>
        <end position="220"/>
    </location>
</feature>
<feature type="compositionally biased region" description="Polar residues" evidence="3">
    <location>
        <begin position="256"/>
        <end position="272"/>
    </location>
</feature>
<feature type="compositionally biased region" description="Basic and acidic residues" evidence="3">
    <location>
        <begin position="273"/>
        <end position="285"/>
    </location>
</feature>
<name>PMEPA_XENLA</name>
<dbReference type="EMBL" id="AB365488">
    <property type="protein sequence ID" value="BAF96587.1"/>
    <property type="status" value="ALT_INIT"/>
    <property type="molecule type" value="mRNA"/>
</dbReference>
<dbReference type="EMBL" id="AB477425">
    <property type="protein sequence ID" value="BAI66653.1"/>
    <property type="molecule type" value="mRNA"/>
</dbReference>
<dbReference type="RefSeq" id="NP_001108307.1">
    <property type="nucleotide sequence ID" value="NM_001114835.1"/>
</dbReference>
<dbReference type="RefSeq" id="NP_001165362.1">
    <property type="nucleotide sequence ID" value="NM_001171891.1"/>
</dbReference>
<dbReference type="GeneID" id="100137708"/>
<dbReference type="KEGG" id="xla:100137708"/>
<dbReference type="AGR" id="Xenbase:XB-GENE-1013949"/>
<dbReference type="CTD" id="100137708"/>
<dbReference type="Xenbase" id="XB-GENE-1013949">
    <property type="gene designation" value="pmepa1.L"/>
</dbReference>
<dbReference type="OrthoDB" id="10038550at2759"/>
<dbReference type="Proteomes" id="UP000186698">
    <property type="component" value="Chromosome 9_10L"/>
</dbReference>
<dbReference type="Bgee" id="100137708">
    <property type="expression patterns" value="Expressed in internal ear and 19 other cell types or tissues"/>
</dbReference>
<dbReference type="GO" id="GO:0031901">
    <property type="term" value="C:early endosome membrane"/>
    <property type="evidence" value="ECO:0000318"/>
    <property type="project" value="GO_Central"/>
</dbReference>
<dbReference type="GO" id="GO:0010008">
    <property type="term" value="C:endosome membrane"/>
    <property type="evidence" value="ECO:0000250"/>
    <property type="project" value="UniProtKB"/>
</dbReference>
<dbReference type="GO" id="GO:0000139">
    <property type="term" value="C:Golgi membrane"/>
    <property type="evidence" value="ECO:0000250"/>
    <property type="project" value="UniProtKB"/>
</dbReference>
<dbReference type="GO" id="GO:0070412">
    <property type="term" value="F:R-SMAD binding"/>
    <property type="evidence" value="ECO:0000318"/>
    <property type="project" value="GO_Central"/>
</dbReference>
<dbReference type="GO" id="GO:0060392">
    <property type="term" value="P:negative regulation of SMAD protein signal transduction"/>
    <property type="evidence" value="ECO:0000250"/>
    <property type="project" value="UniProtKB"/>
</dbReference>
<dbReference type="GO" id="GO:0030512">
    <property type="term" value="P:negative regulation of transforming growth factor beta receptor signaling pathway"/>
    <property type="evidence" value="ECO:0000250"/>
    <property type="project" value="UniProtKB"/>
</dbReference>
<dbReference type="InterPro" id="IPR043445">
    <property type="entry name" value="TMEPAI/LRAD4"/>
</dbReference>
<dbReference type="PANTHER" id="PTHR16514">
    <property type="entry name" value="LOW DENSITY LIPOPROTEIN RECEPTOR CLASS A DOMAIN-CONTAINING 4A"/>
    <property type="match status" value="1"/>
</dbReference>
<dbReference type="PANTHER" id="PTHR16514:SF5">
    <property type="entry name" value="PROTEIN TMEPAI"/>
    <property type="match status" value="1"/>
</dbReference>
<proteinExistence type="evidence at transcript level"/>
<organism>
    <name type="scientific">Xenopus laevis</name>
    <name type="common">African clawed frog</name>
    <dbReference type="NCBI Taxonomy" id="8355"/>
    <lineage>
        <taxon>Eukaryota</taxon>
        <taxon>Metazoa</taxon>
        <taxon>Chordata</taxon>
        <taxon>Craniata</taxon>
        <taxon>Vertebrata</taxon>
        <taxon>Euteleostomi</taxon>
        <taxon>Amphibia</taxon>
        <taxon>Batrachia</taxon>
        <taxon>Anura</taxon>
        <taxon>Pipoidea</taxon>
        <taxon>Pipidae</taxon>
        <taxon>Xenopodinae</taxon>
        <taxon>Xenopus</taxon>
        <taxon>Xenopus</taxon>
    </lineage>
</organism>
<evidence type="ECO:0000250" key="1"/>
<evidence type="ECO:0000255" key="2"/>
<evidence type="ECO:0000256" key="3">
    <source>
        <dbReference type="SAM" id="MobiDB-lite"/>
    </source>
</evidence>
<evidence type="ECO:0000269" key="4">
    <source>
    </source>
</evidence>
<evidence type="ECO:0000305" key="5"/>
<comment type="function">
    <text evidence="4">May function as a negative regulator of TGF-beta signaling and thereby inhibits activin-mediated mesoderm formation.</text>
</comment>
<comment type="subcellular location">
    <subcellularLocation>
        <location evidence="1">Early endosome membrane</location>
        <topology evidence="1">Single-pass membrane protein</topology>
    </subcellularLocation>
    <subcellularLocation>
        <location evidence="1">Golgi apparatus membrane</location>
        <topology evidence="1">Single-pass membrane protein</topology>
    </subcellularLocation>
</comment>
<comment type="similarity">
    <text evidence="5">Belongs to the PMEPA1 family.</text>
</comment>
<comment type="sequence caution" evidence="5">
    <conflict type="erroneous initiation">
        <sequence resource="EMBL-CDS" id="BAF96587"/>
    </conflict>
    <text>Truncated N-terminus.</text>
</comment>
<reference key="1">
    <citation type="journal article" date="2010" name="Mol. Cell">
        <title>TMEPAI, a transmembrane TGF-beta-inducible protein, sequesters Smad proteins from active participation in TGF-beta signaling.</title>
        <authorList>
            <person name="Watanabe Y."/>
            <person name="Itoh S."/>
            <person name="Goto T."/>
            <person name="Ohnishi E."/>
            <person name="Inamitsu M."/>
            <person name="Itoh F."/>
            <person name="Satoh K."/>
            <person name="Wiercinska E."/>
            <person name="Yang W."/>
            <person name="Shi L."/>
            <person name="Tanaka A."/>
            <person name="Nakano N."/>
            <person name="Mommaas A.M."/>
            <person name="Shibuya H."/>
            <person name="Ten Dijke P."/>
            <person name="Kato M."/>
        </authorList>
    </citation>
    <scope>NUCLEOTIDE SEQUENCE [MRNA]</scope>
    <scope>FUNCTION</scope>
</reference>
<protein>
    <recommendedName>
        <fullName>Protein TMEPAI</fullName>
    </recommendedName>
    <alternativeName>
        <fullName>Prostate transmembrane protein androgen induced 1</fullName>
    </alternativeName>
    <alternativeName>
        <fullName>Transmembrane prostate androgen-induced protein</fullName>
    </alternativeName>
</protein>
<accession>D2KUZ7</accession>
<accession>A9ZS93</accession>
<gene>
    <name type="primary">pmepa1</name>
    <name type="synonym">tmepai</name>
</gene>
<keyword id="KW-0967">Endosome</keyword>
<keyword id="KW-0333">Golgi apparatus</keyword>
<keyword id="KW-0472">Membrane</keyword>
<keyword id="KW-1185">Reference proteome</keyword>
<keyword id="KW-0677">Repeat</keyword>
<keyword id="KW-0734">Signal transduction inhibitor</keyword>
<keyword id="KW-0812">Transmembrane</keyword>
<keyword id="KW-1133">Transmembrane helix</keyword>
<sequence length="285" mass="32071">MHNLMGLNSTSESIHSNVSCTCNCKRSLFQTMEISELEFVQIIIIVVVMMVMVVVITCLLNHYKLSARSFIHRHSQGRRREENLSSEGNLWPSESTVSGNGIIEQHIYTPRPSDRLSVPSFLQRDRFNRFQPTYPYIQNEIDLPPTISLSDGEEPPPYQGPCTLQLRDPEQQMELNRESVRAPPNRTIFDSDLIDSSVYGGPCPPSSNSGVSATSYSSNGRMEGPPPTYNEVIGHYPRSSFYHCQQPNLATPSILESNRLQPGNHGLDSTITRSKDKDKQKGQPF</sequence>